<proteinExistence type="inferred from homology"/>
<protein>
    <recommendedName>
        <fullName evidence="1">Acyl-[acyl-carrier-protein]--UDP-N-acetylglucosamine O-acyltransferase</fullName>
        <shortName evidence="1">UDP-N-acetylglucosamine acyltransferase</shortName>
        <ecNumber evidence="1">2.3.1.129</ecNumber>
    </recommendedName>
</protein>
<feature type="chain" id="PRO_1000080207" description="Acyl-[acyl-carrier-protein]--UDP-N-acetylglucosamine O-acyltransferase">
    <location>
        <begin position="1"/>
        <end position="262"/>
    </location>
</feature>
<keyword id="KW-0012">Acyltransferase</keyword>
<keyword id="KW-0963">Cytoplasm</keyword>
<keyword id="KW-0441">Lipid A biosynthesis</keyword>
<keyword id="KW-0444">Lipid biosynthesis</keyword>
<keyword id="KW-0443">Lipid metabolism</keyword>
<keyword id="KW-0677">Repeat</keyword>
<keyword id="KW-0808">Transferase</keyword>
<comment type="function">
    <text evidence="1">Involved in the biosynthesis of lipid A, a phosphorylated glycolipid that anchors the lipopolysaccharide to the outer membrane of the cell.</text>
</comment>
<comment type="catalytic activity">
    <reaction evidence="1">
        <text>a (3R)-hydroxyacyl-[ACP] + UDP-N-acetyl-alpha-D-glucosamine = a UDP-3-O-[(3R)-3-hydroxyacyl]-N-acetyl-alpha-D-glucosamine + holo-[ACP]</text>
        <dbReference type="Rhea" id="RHEA:67812"/>
        <dbReference type="Rhea" id="RHEA-COMP:9685"/>
        <dbReference type="Rhea" id="RHEA-COMP:9945"/>
        <dbReference type="ChEBI" id="CHEBI:57705"/>
        <dbReference type="ChEBI" id="CHEBI:64479"/>
        <dbReference type="ChEBI" id="CHEBI:78827"/>
        <dbReference type="ChEBI" id="CHEBI:173225"/>
        <dbReference type="EC" id="2.3.1.129"/>
    </reaction>
</comment>
<comment type="pathway">
    <text evidence="1">Glycolipid biosynthesis; lipid IV(A) biosynthesis; lipid IV(A) from (3R)-3-hydroxytetradecanoyl-[acyl-carrier-protein] and UDP-N-acetyl-alpha-D-glucosamine: step 1/6.</text>
</comment>
<comment type="subunit">
    <text evidence="1">Homotrimer.</text>
</comment>
<comment type="subcellular location">
    <subcellularLocation>
        <location evidence="1">Cytoplasm</location>
    </subcellularLocation>
</comment>
<comment type="similarity">
    <text evidence="1">Belongs to the transferase hexapeptide repeat family. LpxA subfamily.</text>
</comment>
<gene>
    <name evidence="1" type="primary">lpxA</name>
    <name type="ordered locus">EcolC_3479</name>
</gene>
<reference key="1">
    <citation type="submission" date="2008-02" db="EMBL/GenBank/DDBJ databases">
        <title>Complete sequence of Escherichia coli C str. ATCC 8739.</title>
        <authorList>
            <person name="Copeland A."/>
            <person name="Lucas S."/>
            <person name="Lapidus A."/>
            <person name="Glavina del Rio T."/>
            <person name="Dalin E."/>
            <person name="Tice H."/>
            <person name="Bruce D."/>
            <person name="Goodwin L."/>
            <person name="Pitluck S."/>
            <person name="Kiss H."/>
            <person name="Brettin T."/>
            <person name="Detter J.C."/>
            <person name="Han C."/>
            <person name="Kuske C.R."/>
            <person name="Schmutz J."/>
            <person name="Larimer F."/>
            <person name="Land M."/>
            <person name="Hauser L."/>
            <person name="Kyrpides N."/>
            <person name="Mikhailova N."/>
            <person name="Ingram L."/>
            <person name="Richardson P."/>
        </authorList>
    </citation>
    <scope>NUCLEOTIDE SEQUENCE [LARGE SCALE GENOMIC DNA]</scope>
    <source>
        <strain>ATCC 8739 / DSM 1576 / NBRC 3972 / NCIMB 8545 / WDCM 00012 / Crooks</strain>
    </source>
</reference>
<sequence>MIDKSAFVHPTAIVEEGASIGANAHIGPFCIVGPHVEIGEGTVLKSHVVVNGHTKIGRDNEIYQFASIGEVNQDLKYAGEPTRVEIGDRNRIRESVTIHRGTVQGGGLTKVGSDNLLMINAHIAHDCTVGNRCILANNATLAGHVSVDDFAIIGGMTAVHQFCIIGAHVMVGGCSGVAQDVPPYVIAQGNHATPFGVNIEGLKRRGFSREAITAIRNAYKLIYRSGKTLDEVKPEIAELAETYPEVKAFTDFFARSTRGLIR</sequence>
<accession>B1IQG0</accession>
<name>LPXA_ECOLC</name>
<dbReference type="EC" id="2.3.1.129" evidence="1"/>
<dbReference type="EMBL" id="CP000946">
    <property type="protein sequence ID" value="ACA79093.1"/>
    <property type="molecule type" value="Genomic_DNA"/>
</dbReference>
<dbReference type="RefSeq" id="WP_000565966.1">
    <property type="nucleotide sequence ID" value="NZ_MTFT01000035.1"/>
</dbReference>
<dbReference type="SMR" id="B1IQG0"/>
<dbReference type="GeneID" id="93777244"/>
<dbReference type="KEGG" id="ecl:EcolC_3479"/>
<dbReference type="HOGENOM" id="CLU_061249_0_0_6"/>
<dbReference type="UniPathway" id="UPA00359">
    <property type="reaction ID" value="UER00477"/>
</dbReference>
<dbReference type="GO" id="GO:0005737">
    <property type="term" value="C:cytoplasm"/>
    <property type="evidence" value="ECO:0007669"/>
    <property type="project" value="UniProtKB-SubCell"/>
</dbReference>
<dbReference type="GO" id="GO:0016020">
    <property type="term" value="C:membrane"/>
    <property type="evidence" value="ECO:0007669"/>
    <property type="project" value="GOC"/>
</dbReference>
<dbReference type="GO" id="GO:0008780">
    <property type="term" value="F:acyl-[acyl-carrier-protein]-UDP-N-acetylglucosamine O-acyltransferase activity"/>
    <property type="evidence" value="ECO:0007669"/>
    <property type="project" value="UniProtKB-UniRule"/>
</dbReference>
<dbReference type="GO" id="GO:0009245">
    <property type="term" value="P:lipid A biosynthetic process"/>
    <property type="evidence" value="ECO:0007669"/>
    <property type="project" value="UniProtKB-UniRule"/>
</dbReference>
<dbReference type="CDD" id="cd03351">
    <property type="entry name" value="LbH_UDP-GlcNAc_AT"/>
    <property type="match status" value="1"/>
</dbReference>
<dbReference type="FunFam" id="1.20.1180.10:FF:000001">
    <property type="entry name" value="Acyl-[acyl-carrier-protein]--UDP-N-acetylglucosamine O-acyltransferase"/>
    <property type="match status" value="1"/>
</dbReference>
<dbReference type="FunFam" id="2.160.10.10:FF:000003">
    <property type="entry name" value="Acyl-[acyl-carrier-protein]--UDP-N-acetylglucosamine O-acyltransferase"/>
    <property type="match status" value="1"/>
</dbReference>
<dbReference type="Gene3D" id="2.160.10.10">
    <property type="entry name" value="Hexapeptide repeat proteins"/>
    <property type="match status" value="1"/>
</dbReference>
<dbReference type="Gene3D" id="1.20.1180.10">
    <property type="entry name" value="Udp N-acetylglucosamine O-acyltransferase, C-terminal domain"/>
    <property type="match status" value="1"/>
</dbReference>
<dbReference type="HAMAP" id="MF_00387">
    <property type="entry name" value="LpxA"/>
    <property type="match status" value="1"/>
</dbReference>
<dbReference type="InterPro" id="IPR029098">
    <property type="entry name" value="Acetyltransf_C"/>
</dbReference>
<dbReference type="InterPro" id="IPR037157">
    <property type="entry name" value="Acetyltransf_C_sf"/>
</dbReference>
<dbReference type="InterPro" id="IPR001451">
    <property type="entry name" value="Hexapep"/>
</dbReference>
<dbReference type="InterPro" id="IPR018357">
    <property type="entry name" value="Hexapep_transf_CS"/>
</dbReference>
<dbReference type="InterPro" id="IPR010137">
    <property type="entry name" value="Lipid_A_LpxA"/>
</dbReference>
<dbReference type="InterPro" id="IPR011004">
    <property type="entry name" value="Trimer_LpxA-like_sf"/>
</dbReference>
<dbReference type="NCBIfam" id="TIGR01852">
    <property type="entry name" value="lipid_A_lpxA"/>
    <property type="match status" value="1"/>
</dbReference>
<dbReference type="NCBIfam" id="NF003657">
    <property type="entry name" value="PRK05289.1"/>
    <property type="match status" value="1"/>
</dbReference>
<dbReference type="PANTHER" id="PTHR43480">
    <property type="entry name" value="ACYL-[ACYL-CARRIER-PROTEIN]--UDP-N-ACETYLGLUCOSAMINE O-ACYLTRANSFERASE"/>
    <property type="match status" value="1"/>
</dbReference>
<dbReference type="PANTHER" id="PTHR43480:SF1">
    <property type="entry name" value="ACYL-[ACYL-CARRIER-PROTEIN]--UDP-N-ACETYLGLUCOSAMINE O-ACYLTRANSFERASE, MITOCHONDRIAL-RELATED"/>
    <property type="match status" value="1"/>
</dbReference>
<dbReference type="Pfam" id="PF13720">
    <property type="entry name" value="Acetyltransf_11"/>
    <property type="match status" value="1"/>
</dbReference>
<dbReference type="Pfam" id="PF00132">
    <property type="entry name" value="Hexapep"/>
    <property type="match status" value="2"/>
</dbReference>
<dbReference type="PIRSF" id="PIRSF000456">
    <property type="entry name" value="UDP-GlcNAc_acltr"/>
    <property type="match status" value="1"/>
</dbReference>
<dbReference type="SUPFAM" id="SSF51161">
    <property type="entry name" value="Trimeric LpxA-like enzymes"/>
    <property type="match status" value="1"/>
</dbReference>
<dbReference type="PROSITE" id="PS00101">
    <property type="entry name" value="HEXAPEP_TRANSFERASES"/>
    <property type="match status" value="2"/>
</dbReference>
<evidence type="ECO:0000255" key="1">
    <source>
        <dbReference type="HAMAP-Rule" id="MF_00387"/>
    </source>
</evidence>
<organism>
    <name type="scientific">Escherichia coli (strain ATCC 8739 / DSM 1576 / NBRC 3972 / NCIMB 8545 / WDCM 00012 / Crooks)</name>
    <dbReference type="NCBI Taxonomy" id="481805"/>
    <lineage>
        <taxon>Bacteria</taxon>
        <taxon>Pseudomonadati</taxon>
        <taxon>Pseudomonadota</taxon>
        <taxon>Gammaproteobacteria</taxon>
        <taxon>Enterobacterales</taxon>
        <taxon>Enterobacteriaceae</taxon>
        <taxon>Escherichia</taxon>
    </lineage>
</organism>